<accession>Q87KA9</accession>
<name>ATPE_VIBPA</name>
<keyword id="KW-0066">ATP synthesis</keyword>
<keyword id="KW-0997">Cell inner membrane</keyword>
<keyword id="KW-1003">Cell membrane</keyword>
<keyword id="KW-0139">CF(1)</keyword>
<keyword id="KW-0375">Hydrogen ion transport</keyword>
<keyword id="KW-0406">Ion transport</keyword>
<keyword id="KW-0472">Membrane</keyword>
<keyword id="KW-0813">Transport</keyword>
<comment type="function">
    <text evidence="1">Produces ATP from ADP in the presence of a proton gradient across the membrane.</text>
</comment>
<comment type="subunit">
    <text>F-type ATPases have 2 components, CF(1) - the catalytic core - and CF(0) - the membrane proton channel. CF(1) has five subunits: alpha(3), beta(3), gamma(1), delta(1), epsilon(1). CF(0) has three main subunits: a, b and c.</text>
</comment>
<comment type="subcellular location">
    <subcellularLocation>
        <location evidence="1">Cell inner membrane</location>
        <topology evidence="1">Peripheral membrane protein</topology>
    </subcellularLocation>
</comment>
<comment type="similarity">
    <text evidence="1">Belongs to the ATPase epsilon chain family.</text>
</comment>
<protein>
    <recommendedName>
        <fullName evidence="1">ATP synthase epsilon chain</fullName>
    </recommendedName>
    <alternativeName>
        <fullName evidence="1">ATP synthase F1 sector epsilon subunit</fullName>
    </alternativeName>
    <alternativeName>
        <fullName evidence="1">F-ATPase epsilon subunit</fullName>
    </alternativeName>
</protein>
<organism>
    <name type="scientific">Vibrio parahaemolyticus serotype O3:K6 (strain RIMD 2210633)</name>
    <dbReference type="NCBI Taxonomy" id="223926"/>
    <lineage>
        <taxon>Bacteria</taxon>
        <taxon>Pseudomonadati</taxon>
        <taxon>Pseudomonadota</taxon>
        <taxon>Gammaproteobacteria</taxon>
        <taxon>Vibrionales</taxon>
        <taxon>Vibrionaceae</taxon>
        <taxon>Vibrio</taxon>
    </lineage>
</organism>
<feature type="chain" id="PRO_0000188237" description="ATP synthase epsilon chain">
    <location>
        <begin position="1"/>
        <end position="140"/>
    </location>
</feature>
<sequence>MAPITFHLDVVSAEKRIFSGRVETFQVTGSEGELGIFHGHTPLLSAIKPGMVRIVKQHGHEEFIYVSGGMVEVQPGTATVLADTAIRGEDLDAAKAEEAKRRAEEKIQNQHGDMDFAQAASELAKAIAQLRVIELTKKRR</sequence>
<proteinExistence type="inferred from homology"/>
<reference key="1">
    <citation type="journal article" date="2003" name="Lancet">
        <title>Genome sequence of Vibrio parahaemolyticus: a pathogenic mechanism distinct from that of V. cholerae.</title>
        <authorList>
            <person name="Makino K."/>
            <person name="Oshima K."/>
            <person name="Kurokawa K."/>
            <person name="Yokoyama K."/>
            <person name="Uda T."/>
            <person name="Tagomori K."/>
            <person name="Iijima Y."/>
            <person name="Najima M."/>
            <person name="Nakano M."/>
            <person name="Yamashita A."/>
            <person name="Kubota Y."/>
            <person name="Kimura S."/>
            <person name="Yasunaga T."/>
            <person name="Honda T."/>
            <person name="Shinagawa H."/>
            <person name="Hattori M."/>
            <person name="Iida T."/>
        </authorList>
    </citation>
    <scope>NUCLEOTIDE SEQUENCE [LARGE SCALE GENOMIC DNA]</scope>
    <source>
        <strain>RIMD 2210633</strain>
    </source>
</reference>
<gene>
    <name evidence="1" type="primary">atpC</name>
    <name type="ordered locus">VP3068</name>
</gene>
<dbReference type="EMBL" id="BA000031">
    <property type="protein sequence ID" value="BAC61331.1"/>
    <property type="molecule type" value="Genomic_DNA"/>
</dbReference>
<dbReference type="RefSeq" id="NP_799447.1">
    <property type="nucleotide sequence ID" value="NC_004603.1"/>
</dbReference>
<dbReference type="RefSeq" id="WP_005456027.1">
    <property type="nucleotide sequence ID" value="NC_004603.1"/>
</dbReference>
<dbReference type="SMR" id="Q87KA9"/>
<dbReference type="GeneID" id="1190667"/>
<dbReference type="KEGG" id="vpa:VP3068"/>
<dbReference type="PATRIC" id="fig|223926.6.peg.2954"/>
<dbReference type="eggNOG" id="COG0355">
    <property type="taxonomic scope" value="Bacteria"/>
</dbReference>
<dbReference type="HOGENOM" id="CLU_084338_2_0_6"/>
<dbReference type="Proteomes" id="UP000002493">
    <property type="component" value="Chromosome 1"/>
</dbReference>
<dbReference type="GO" id="GO:0005886">
    <property type="term" value="C:plasma membrane"/>
    <property type="evidence" value="ECO:0007669"/>
    <property type="project" value="UniProtKB-SubCell"/>
</dbReference>
<dbReference type="GO" id="GO:0045259">
    <property type="term" value="C:proton-transporting ATP synthase complex"/>
    <property type="evidence" value="ECO:0007669"/>
    <property type="project" value="UniProtKB-KW"/>
</dbReference>
<dbReference type="GO" id="GO:0005524">
    <property type="term" value="F:ATP binding"/>
    <property type="evidence" value="ECO:0007669"/>
    <property type="project" value="UniProtKB-UniRule"/>
</dbReference>
<dbReference type="GO" id="GO:0046933">
    <property type="term" value="F:proton-transporting ATP synthase activity, rotational mechanism"/>
    <property type="evidence" value="ECO:0007669"/>
    <property type="project" value="UniProtKB-UniRule"/>
</dbReference>
<dbReference type="CDD" id="cd12152">
    <property type="entry name" value="F1-ATPase_delta"/>
    <property type="match status" value="1"/>
</dbReference>
<dbReference type="FunFam" id="1.20.5.440:FF:000001">
    <property type="entry name" value="ATP synthase epsilon chain"/>
    <property type="match status" value="1"/>
</dbReference>
<dbReference type="FunFam" id="2.60.15.10:FF:000001">
    <property type="entry name" value="ATP synthase epsilon chain"/>
    <property type="match status" value="1"/>
</dbReference>
<dbReference type="Gene3D" id="1.20.5.440">
    <property type="entry name" value="ATP synthase delta/epsilon subunit, C-terminal domain"/>
    <property type="match status" value="1"/>
</dbReference>
<dbReference type="Gene3D" id="2.60.15.10">
    <property type="entry name" value="F0F1 ATP synthase delta/epsilon subunit, N-terminal"/>
    <property type="match status" value="1"/>
</dbReference>
<dbReference type="HAMAP" id="MF_00530">
    <property type="entry name" value="ATP_synth_epsil_bac"/>
    <property type="match status" value="1"/>
</dbReference>
<dbReference type="InterPro" id="IPR036794">
    <property type="entry name" value="ATP_F1_dsu/esu_C_sf"/>
</dbReference>
<dbReference type="InterPro" id="IPR001469">
    <property type="entry name" value="ATP_synth_F1_dsu/esu"/>
</dbReference>
<dbReference type="InterPro" id="IPR020546">
    <property type="entry name" value="ATP_synth_F1_dsu/esu_N"/>
</dbReference>
<dbReference type="InterPro" id="IPR020547">
    <property type="entry name" value="ATP_synth_F1_esu_C"/>
</dbReference>
<dbReference type="InterPro" id="IPR036771">
    <property type="entry name" value="ATPsynth_dsu/esu_N"/>
</dbReference>
<dbReference type="NCBIfam" id="TIGR01216">
    <property type="entry name" value="ATP_synt_epsi"/>
    <property type="match status" value="1"/>
</dbReference>
<dbReference type="NCBIfam" id="NF001847">
    <property type="entry name" value="PRK00571.1-4"/>
    <property type="match status" value="1"/>
</dbReference>
<dbReference type="PANTHER" id="PTHR13822">
    <property type="entry name" value="ATP SYNTHASE DELTA/EPSILON CHAIN"/>
    <property type="match status" value="1"/>
</dbReference>
<dbReference type="PANTHER" id="PTHR13822:SF10">
    <property type="entry name" value="ATP SYNTHASE EPSILON CHAIN, CHLOROPLASTIC"/>
    <property type="match status" value="1"/>
</dbReference>
<dbReference type="Pfam" id="PF00401">
    <property type="entry name" value="ATP-synt_DE"/>
    <property type="match status" value="1"/>
</dbReference>
<dbReference type="Pfam" id="PF02823">
    <property type="entry name" value="ATP-synt_DE_N"/>
    <property type="match status" value="1"/>
</dbReference>
<dbReference type="SUPFAM" id="SSF46604">
    <property type="entry name" value="Epsilon subunit of F1F0-ATP synthase C-terminal domain"/>
    <property type="match status" value="1"/>
</dbReference>
<dbReference type="SUPFAM" id="SSF51344">
    <property type="entry name" value="Epsilon subunit of F1F0-ATP synthase N-terminal domain"/>
    <property type="match status" value="1"/>
</dbReference>
<evidence type="ECO:0000255" key="1">
    <source>
        <dbReference type="HAMAP-Rule" id="MF_00530"/>
    </source>
</evidence>